<accession>Q06589</accession>
<organism>
    <name type="scientific">Ceratitis capitata</name>
    <name type="common">Mediterranean fruit fly</name>
    <name type="synonym">Tephritis capitata</name>
    <dbReference type="NCBI Taxonomy" id="7213"/>
    <lineage>
        <taxon>Eukaryota</taxon>
        <taxon>Metazoa</taxon>
        <taxon>Ecdysozoa</taxon>
        <taxon>Arthropoda</taxon>
        <taxon>Hexapoda</taxon>
        <taxon>Insecta</taxon>
        <taxon>Pterygota</taxon>
        <taxon>Neoptera</taxon>
        <taxon>Endopterygota</taxon>
        <taxon>Diptera</taxon>
        <taxon>Brachycera</taxon>
        <taxon>Muscomorpha</taxon>
        <taxon>Tephritoidea</taxon>
        <taxon>Tephritidae</taxon>
        <taxon>Ceratitis</taxon>
        <taxon>Ceratitis</taxon>
    </lineage>
</organism>
<reference key="1">
    <citation type="journal article" date="1993" name="Gene">
        <title>Sequences of two cDNA clones from the medfly Ceratitis capitata encoding antibacterial peptides of the cecropin family.</title>
        <authorList>
            <person name="Rosetto M."/>
            <person name="Manetti A.G.O."/>
            <person name="Marchini D."/>
            <person name="Dallai R."/>
            <person name="Telford J.L."/>
            <person name="Baldari C.T."/>
        </authorList>
    </citation>
    <scope>NUCLEOTIDE SEQUENCE [MRNA]</scope>
</reference>
<comment type="function">
    <text>Cecropins have lytic and antibacterial activity against several Gram-positive and Gram-negative bacteria.</text>
</comment>
<comment type="subcellular location">
    <subcellularLocation>
        <location>Secreted</location>
    </subcellularLocation>
</comment>
<comment type="similarity">
    <text evidence="3">Belongs to the cecropin family.</text>
</comment>
<dbReference type="EMBL" id="X70030">
    <property type="protein sequence ID" value="CAA49618.1"/>
    <property type="molecule type" value="mRNA"/>
</dbReference>
<dbReference type="PIR" id="JT0673">
    <property type="entry name" value="JT0673"/>
</dbReference>
<dbReference type="SMR" id="Q06589"/>
<dbReference type="EnsemblMetazoa" id="XM_004534277.3">
    <property type="protein sequence ID" value="XP_004534334.1"/>
    <property type="gene ID" value="LOC101457159"/>
</dbReference>
<dbReference type="GeneID" id="101457159"/>
<dbReference type="KEGG" id="ccat:101457159"/>
<dbReference type="GO" id="GO:0005615">
    <property type="term" value="C:extracellular space"/>
    <property type="evidence" value="ECO:0007669"/>
    <property type="project" value="TreeGrafter"/>
</dbReference>
<dbReference type="GO" id="GO:0019731">
    <property type="term" value="P:antibacterial humoral response"/>
    <property type="evidence" value="ECO:0007669"/>
    <property type="project" value="InterPro"/>
</dbReference>
<dbReference type="GO" id="GO:0050829">
    <property type="term" value="P:defense response to Gram-negative bacterium"/>
    <property type="evidence" value="ECO:0007669"/>
    <property type="project" value="UniProtKB-ARBA"/>
</dbReference>
<dbReference type="GO" id="GO:0050830">
    <property type="term" value="P:defense response to Gram-positive bacterium"/>
    <property type="evidence" value="ECO:0007669"/>
    <property type="project" value="TreeGrafter"/>
</dbReference>
<dbReference type="GO" id="GO:0045087">
    <property type="term" value="P:innate immune response"/>
    <property type="evidence" value="ECO:0007669"/>
    <property type="project" value="UniProtKB-KW"/>
</dbReference>
<dbReference type="InterPro" id="IPR000875">
    <property type="entry name" value="Cecropin"/>
</dbReference>
<dbReference type="InterPro" id="IPR020400">
    <property type="entry name" value="Cecropin_insect"/>
</dbReference>
<dbReference type="PANTHER" id="PTHR38329">
    <property type="entry name" value="CECROPIN-A1-RELATED"/>
    <property type="match status" value="1"/>
</dbReference>
<dbReference type="PANTHER" id="PTHR38329:SF1">
    <property type="entry name" value="CECROPIN-A1-RELATED"/>
    <property type="match status" value="1"/>
</dbReference>
<dbReference type="Pfam" id="PF00272">
    <property type="entry name" value="Cecropin"/>
    <property type="match status" value="1"/>
</dbReference>
<dbReference type="PROSITE" id="PS00268">
    <property type="entry name" value="CECROPIN"/>
    <property type="match status" value="1"/>
</dbReference>
<protein>
    <recommendedName>
        <fullName>Cecropin-1</fullName>
    </recommendedName>
</protein>
<name>CEC1_CERCA</name>
<evidence type="ECO:0000250" key="1"/>
<evidence type="ECO:0000255" key="2"/>
<evidence type="ECO:0000305" key="3"/>
<gene>
    <name type="primary">CEC1</name>
</gene>
<feature type="signal peptide" evidence="2">
    <location>
        <begin position="1"/>
        <end position="21"/>
    </location>
</feature>
<feature type="propeptide" id="PRO_0000004832" evidence="2">
    <location>
        <begin position="22"/>
        <end position="23"/>
    </location>
</feature>
<feature type="chain" id="PRO_0000004833" description="Cecropin-1">
    <location>
        <begin position="24"/>
        <end position="62"/>
    </location>
</feature>
<feature type="modified residue" description="Arginine amide" evidence="1">
    <location>
        <position position="62"/>
    </location>
</feature>
<sequence>MNFNKVFILVAIVIAIFAGQTEAGWLKKIGKKIERVGQHTRDATIQTIAVAQQAANVAATARG</sequence>
<proteinExistence type="inferred from homology"/>
<keyword id="KW-0027">Amidation</keyword>
<keyword id="KW-0044">Antibiotic</keyword>
<keyword id="KW-0929">Antimicrobial</keyword>
<keyword id="KW-0391">Immunity</keyword>
<keyword id="KW-0399">Innate immunity</keyword>
<keyword id="KW-0964">Secreted</keyword>
<keyword id="KW-0732">Signal</keyword>